<protein>
    <recommendedName>
        <fullName evidence="6">Zinc transporter ZIP9</fullName>
    </recommendedName>
    <alternativeName>
        <fullName>Solute carrier family 39 member 9</fullName>
    </alternativeName>
    <alternativeName>
        <fullName>Zrt- and Irt-like protein 9</fullName>
        <shortName>ZIP-9</shortName>
    </alternativeName>
</protein>
<comment type="function">
    <text evidence="1 4 5">Transports zinc ions across cell and organelle membranes into the cytoplasm and regulates intracellular zinc homeostasis. Participates in the zinc ions efflux out of the secretory compartments. Regulates intracellular zinc level, resulting in the enhancement of AKT1 and MAPK3/MAPK1 (Erk1/2) phosphorylation in response to the BCR activation (By similarity). Also functions as a membrane androgen receptor that mediates, through a G protein, the non-classical androgen signaling pathway, characterized by the activation of MAPK3/MAPK1 (Erk1/2) and transcription factors CREB1 or ATF1 (PubMed:27164415, PubMed:35625396). This pathway contributes to CLDN1 and CLDN5 expression and tight junction formation between adjacent Sertoli cells (PubMed:27164415, PubMed:35625396). Mediates androgen-induced vascular endothelial cell proliferation through activation of an inhibitory G protein leading to the AKT1 and MAPK3/MAPK1 (Erk1/2) activation which in turn modulate inhibition (phosphorylation) of GSK3B and CCND1 transcription. Moreover, has dual functions as a membrane-bound androgen receptor and as an androgen-dependent zinc transporter both of which are mediated through an inhibitory G protein (Gi) that mediates both MAP kinase and zinc signaling leading to the androgen-dependent apoptotic process (By similarity).</text>
</comment>
<comment type="catalytic activity">
    <reaction evidence="1">
        <text>Zn(2+)(in) = Zn(2+)(out)</text>
        <dbReference type="Rhea" id="RHEA:29351"/>
        <dbReference type="ChEBI" id="CHEBI:29105"/>
    </reaction>
</comment>
<comment type="subcellular location">
    <subcellularLocation>
        <location evidence="1">Golgi apparatus</location>
        <location evidence="1">trans-Golgi network membrane</location>
    </subcellularLocation>
    <subcellularLocation>
        <location evidence="1">Cell membrane</location>
        <topology evidence="1">Multi-pass membrane protein</topology>
    </subcellularLocation>
    <subcellularLocation>
        <location evidence="1">Cytoplasm</location>
        <location evidence="1">Perinuclear region</location>
    </subcellularLocation>
    <subcellularLocation>
        <location evidence="1">Mitochondrion</location>
    </subcellularLocation>
    <subcellularLocation>
        <location evidence="1">Nucleus</location>
    </subcellularLocation>
</comment>
<comment type="similarity">
    <text evidence="6">Belongs to the ZIP transporter (TC 2.A.5) family.</text>
</comment>
<keyword id="KW-1003">Cell membrane</keyword>
<keyword id="KW-0963">Cytoplasm</keyword>
<keyword id="KW-0325">Glycoprotein</keyword>
<keyword id="KW-0333">Golgi apparatus</keyword>
<keyword id="KW-0406">Ion transport</keyword>
<keyword id="KW-0472">Membrane</keyword>
<keyword id="KW-0496">Mitochondrion</keyword>
<keyword id="KW-0539">Nucleus</keyword>
<keyword id="KW-1185">Reference proteome</keyword>
<keyword id="KW-0812">Transmembrane</keyword>
<keyword id="KW-1133">Transmembrane helix</keyword>
<keyword id="KW-0813">Transport</keyword>
<keyword id="KW-0862">Zinc</keyword>
<keyword id="KW-0864">Zinc transport</keyword>
<evidence type="ECO:0000250" key="1">
    <source>
        <dbReference type="UniProtKB" id="Q9NUM3"/>
    </source>
</evidence>
<evidence type="ECO:0000255" key="2"/>
<evidence type="ECO:0000256" key="3">
    <source>
        <dbReference type="SAM" id="MobiDB-lite"/>
    </source>
</evidence>
<evidence type="ECO:0000269" key="4">
    <source>
    </source>
</evidence>
<evidence type="ECO:0000269" key="5">
    <source>
    </source>
</evidence>
<evidence type="ECO:0000305" key="6"/>
<evidence type="ECO:0000312" key="7">
    <source>
        <dbReference type="RGD" id="1311236"/>
    </source>
</evidence>
<gene>
    <name evidence="7" type="primary">Slc39a9</name>
    <name type="synonym">Zip9</name>
</gene>
<sequence>MDDFLSISLLSLAMLVGCYVAGIIPLAVNFSEERLKLVTVLGAGLLCGTALAVIVPEGVHALYEEVLEGKHHQASEAKQNVIASDKAAEISVVHEHEHSHDHTQLHAYIGVSLVLGFVFMLLVDQIGSSHVHSTDDPESARPSSSKITTTLGLVVHAAADGVALGAAASTSQTSVQLIVFVAIMLHKAPAAFGLVSFLMHAGLERNRIRKHLLVFALAAPAMSMLTYLGLSKSSKEALSEVNATGVAMLFSAGTFLYVATVHVLPEDTSTNQSGSSLSPRPLPSGKN</sequence>
<name>S39A9_RAT</name>
<dbReference type="EMBL" id="BC105849">
    <property type="protein sequence ID" value="AAI05850.1"/>
    <property type="molecule type" value="mRNA"/>
</dbReference>
<dbReference type="RefSeq" id="NP_001030101.1">
    <property type="nucleotide sequence ID" value="NM_001034929.2"/>
</dbReference>
<dbReference type="RefSeq" id="XP_017449635.1">
    <property type="nucleotide sequence ID" value="XM_017594146.1"/>
</dbReference>
<dbReference type="SMR" id="Q3KR82"/>
<dbReference type="FunCoup" id="Q3KR82">
    <property type="interactions" value="2191"/>
</dbReference>
<dbReference type="STRING" id="10116.ENSRNOP00000075500"/>
<dbReference type="GlyCosmos" id="Q3KR82">
    <property type="glycosylation" value="3 sites, No reported glycans"/>
</dbReference>
<dbReference type="GlyGen" id="Q3KR82">
    <property type="glycosylation" value="3 sites"/>
</dbReference>
<dbReference type="PhosphoSitePlus" id="Q3KR82"/>
<dbReference type="PaxDb" id="10116-ENSRNOP00000006798"/>
<dbReference type="Ensembl" id="ENSRNOT00000006798.7">
    <property type="protein sequence ID" value="ENSRNOP00000006798.5"/>
    <property type="gene ID" value="ENSRNOG00000005052.7"/>
</dbReference>
<dbReference type="GeneID" id="314275"/>
<dbReference type="KEGG" id="rno:314275"/>
<dbReference type="UCSC" id="RGD:1311236">
    <property type="organism name" value="rat"/>
</dbReference>
<dbReference type="AGR" id="RGD:1311236"/>
<dbReference type="CTD" id="55334"/>
<dbReference type="RGD" id="1311236">
    <property type="gene designation" value="Slc39a9"/>
</dbReference>
<dbReference type="eggNOG" id="KOG3907">
    <property type="taxonomic scope" value="Eukaryota"/>
</dbReference>
<dbReference type="GeneTree" id="ENSGT00390000010094"/>
<dbReference type="InParanoid" id="Q3KR82"/>
<dbReference type="PhylomeDB" id="Q3KR82"/>
<dbReference type="TreeFam" id="TF315051"/>
<dbReference type="PRO" id="PR:Q3KR82"/>
<dbReference type="Proteomes" id="UP000002494">
    <property type="component" value="Chromosome 6"/>
</dbReference>
<dbReference type="Bgee" id="ENSRNOG00000005052">
    <property type="expression patterns" value="Expressed in jejunum and 19 other cell types or tissues"/>
</dbReference>
<dbReference type="ExpressionAtlas" id="Q3KR82">
    <property type="expression patterns" value="baseline and differential"/>
</dbReference>
<dbReference type="GO" id="GO:0031966">
    <property type="term" value="C:mitochondrial membrane"/>
    <property type="evidence" value="ECO:0000250"/>
    <property type="project" value="UniProtKB"/>
</dbReference>
<dbReference type="GO" id="GO:0005739">
    <property type="term" value="C:mitochondrion"/>
    <property type="evidence" value="ECO:0000250"/>
    <property type="project" value="UniProtKB"/>
</dbReference>
<dbReference type="GO" id="GO:0005634">
    <property type="term" value="C:nucleus"/>
    <property type="evidence" value="ECO:0000250"/>
    <property type="project" value="UniProtKB"/>
</dbReference>
<dbReference type="GO" id="GO:0048471">
    <property type="term" value="C:perinuclear region of cytoplasm"/>
    <property type="evidence" value="ECO:0000250"/>
    <property type="project" value="UniProtKB"/>
</dbReference>
<dbReference type="GO" id="GO:0005886">
    <property type="term" value="C:plasma membrane"/>
    <property type="evidence" value="ECO:0000250"/>
    <property type="project" value="UniProtKB"/>
</dbReference>
<dbReference type="GO" id="GO:0005802">
    <property type="term" value="C:trans-Golgi network"/>
    <property type="evidence" value="ECO:0000250"/>
    <property type="project" value="UniProtKB"/>
</dbReference>
<dbReference type="GO" id="GO:0005497">
    <property type="term" value="F:androgen binding"/>
    <property type="evidence" value="ECO:0000315"/>
    <property type="project" value="UniProtKB"/>
</dbReference>
<dbReference type="GO" id="GO:0004930">
    <property type="term" value="F:G protein-coupled receptor activity"/>
    <property type="evidence" value="ECO:0000250"/>
    <property type="project" value="UniProtKB"/>
</dbReference>
<dbReference type="GO" id="GO:0022883">
    <property type="term" value="F:zinc efflux transmembrane transporter activity"/>
    <property type="evidence" value="ECO:0000250"/>
    <property type="project" value="UniProtKB"/>
</dbReference>
<dbReference type="GO" id="GO:0005385">
    <property type="term" value="F:zinc ion transmembrane transporter activity"/>
    <property type="evidence" value="ECO:0000250"/>
    <property type="project" value="UniProtKB"/>
</dbReference>
<dbReference type="GO" id="GO:0070830">
    <property type="term" value="P:bicellular tight junction assembly"/>
    <property type="evidence" value="ECO:0000314"/>
    <property type="project" value="UniProtKB"/>
</dbReference>
<dbReference type="GO" id="GO:0006882">
    <property type="term" value="P:intracellular zinc ion homeostasis"/>
    <property type="evidence" value="ECO:0000250"/>
    <property type="project" value="UniProtKB"/>
</dbReference>
<dbReference type="GO" id="GO:2000654">
    <property type="term" value="P:regulation of cellular response to testosterone stimulus"/>
    <property type="evidence" value="ECO:0000250"/>
    <property type="project" value="UniProtKB"/>
</dbReference>
<dbReference type="GO" id="GO:1905562">
    <property type="term" value="P:regulation of vascular endothelial cell proliferation"/>
    <property type="evidence" value="ECO:0000250"/>
    <property type="project" value="UniProtKB"/>
</dbReference>
<dbReference type="GO" id="GO:0071577">
    <property type="term" value="P:zinc ion transmembrane transport"/>
    <property type="evidence" value="ECO:0000250"/>
    <property type="project" value="UniProtKB"/>
</dbReference>
<dbReference type="InterPro" id="IPR003689">
    <property type="entry name" value="ZIP"/>
</dbReference>
<dbReference type="InterPro" id="IPR045891">
    <property type="entry name" value="ZIP9"/>
</dbReference>
<dbReference type="PANTHER" id="PTHR16133">
    <property type="entry name" value="SOLUTE CARRIER FAMILY 39 ZINC TRANSPORTER , MEMBER 9-RELATED"/>
    <property type="match status" value="1"/>
</dbReference>
<dbReference type="PANTHER" id="PTHR16133:SF5">
    <property type="entry name" value="ZINC TRANSPORTER ZIP9"/>
    <property type="match status" value="1"/>
</dbReference>
<dbReference type="Pfam" id="PF02535">
    <property type="entry name" value="Zip"/>
    <property type="match status" value="1"/>
</dbReference>
<organism>
    <name type="scientific">Rattus norvegicus</name>
    <name type="common">Rat</name>
    <dbReference type="NCBI Taxonomy" id="10116"/>
    <lineage>
        <taxon>Eukaryota</taxon>
        <taxon>Metazoa</taxon>
        <taxon>Chordata</taxon>
        <taxon>Craniata</taxon>
        <taxon>Vertebrata</taxon>
        <taxon>Euteleostomi</taxon>
        <taxon>Mammalia</taxon>
        <taxon>Eutheria</taxon>
        <taxon>Euarchontoglires</taxon>
        <taxon>Glires</taxon>
        <taxon>Rodentia</taxon>
        <taxon>Myomorpha</taxon>
        <taxon>Muroidea</taxon>
        <taxon>Muridae</taxon>
        <taxon>Murinae</taxon>
        <taxon>Rattus</taxon>
    </lineage>
</organism>
<reference key="1">
    <citation type="journal article" date="2004" name="Genome Res.">
        <title>The status, quality, and expansion of the NIH full-length cDNA project: the Mammalian Gene Collection (MGC).</title>
        <authorList>
            <consortium name="The MGC Project Team"/>
        </authorList>
    </citation>
    <scope>NUCLEOTIDE SEQUENCE [LARGE SCALE MRNA]</scope>
    <source>
        <tissue>Testis</tissue>
    </source>
</reference>
<reference key="2">
    <citation type="journal article" date="2016" name="Cell. Signal.">
        <title>Non-classical testosterone signaling mediated through ZIP9 stimulates claudin expression and tight junction formation in Sertoli cells.</title>
        <authorList>
            <person name="Bulldan A."/>
            <person name="Dietze R."/>
            <person name="Shihan M."/>
            <person name="Scheiner-Bobis G."/>
        </authorList>
    </citation>
    <scope>FUNCTION</scope>
</reference>
<reference key="3">
    <citation type="journal article" date="2022" name="Biology">
        <title>The Role of ZIP9 and Androgen Receptor in the Establishment of Tight Junctions between Adult Rat Sertoli Cells.</title>
        <authorList>
            <person name="Kabbesh H."/>
            <person name="Bulldan A."/>
            <person name="Konrad L."/>
            <person name="Scheiner-Bobis G."/>
        </authorList>
    </citation>
    <scope>FUNCTION</scope>
</reference>
<accession>Q3KR82</accession>
<proteinExistence type="evidence at transcript level"/>
<feature type="chain" id="PRO_0000297601" description="Zinc transporter ZIP9">
    <location>
        <begin position="1"/>
        <end position="287"/>
    </location>
</feature>
<feature type="transmembrane region" description="Helical" evidence="2">
    <location>
        <begin position="4"/>
        <end position="24"/>
    </location>
</feature>
<feature type="transmembrane region" description="Helical" evidence="2">
    <location>
        <begin position="35"/>
        <end position="55"/>
    </location>
</feature>
<feature type="transmembrane region" description="Helical" evidence="2">
    <location>
        <begin position="107"/>
        <end position="127"/>
    </location>
</feature>
<feature type="transmembrane region" description="Helical" evidence="2">
    <location>
        <begin position="147"/>
        <end position="167"/>
    </location>
</feature>
<feature type="transmembrane region" description="Helical" evidence="2">
    <location>
        <begin position="177"/>
        <end position="197"/>
    </location>
</feature>
<feature type="transmembrane region" description="Helical" evidence="2">
    <location>
        <begin position="211"/>
        <end position="231"/>
    </location>
</feature>
<feature type="transmembrane region" description="Helical" evidence="2">
    <location>
        <begin position="245"/>
        <end position="265"/>
    </location>
</feature>
<feature type="region of interest" description="Disordered" evidence="3">
    <location>
        <begin position="268"/>
        <end position="287"/>
    </location>
</feature>
<feature type="compositionally biased region" description="Low complexity" evidence="3">
    <location>
        <begin position="273"/>
        <end position="287"/>
    </location>
</feature>
<feature type="glycosylation site" description="N-linked (GlcNAc...) asparagine" evidence="2">
    <location>
        <position position="29"/>
    </location>
</feature>
<feature type="glycosylation site" description="N-linked (GlcNAc...) asparagine" evidence="2">
    <location>
        <position position="242"/>
    </location>
</feature>
<feature type="glycosylation site" description="N-linked (GlcNAc...) asparagine" evidence="2">
    <location>
        <position position="271"/>
    </location>
</feature>